<dbReference type="EMBL" id="CP000001">
    <property type="protein sequence ID" value="AAU15271.1"/>
    <property type="molecule type" value="Genomic_DNA"/>
</dbReference>
<dbReference type="RefSeq" id="WP_000064678.1">
    <property type="nucleotide sequence ID" value="NZ_CP009968.1"/>
</dbReference>
<dbReference type="SMR" id="Q630U0"/>
<dbReference type="GeneID" id="45025138"/>
<dbReference type="KEGG" id="bcz:BCE33L5008"/>
<dbReference type="PATRIC" id="fig|288681.22.peg.338"/>
<dbReference type="Proteomes" id="UP000002612">
    <property type="component" value="Chromosome"/>
</dbReference>
<dbReference type="GO" id="GO:0005886">
    <property type="term" value="C:plasma membrane"/>
    <property type="evidence" value="ECO:0007669"/>
    <property type="project" value="UniProtKB-SubCell"/>
</dbReference>
<dbReference type="GO" id="GO:0045259">
    <property type="term" value="C:proton-transporting ATP synthase complex"/>
    <property type="evidence" value="ECO:0007669"/>
    <property type="project" value="UniProtKB-KW"/>
</dbReference>
<dbReference type="GO" id="GO:0046933">
    <property type="term" value="F:proton-transporting ATP synthase activity, rotational mechanism"/>
    <property type="evidence" value="ECO:0007669"/>
    <property type="project" value="UniProtKB-UniRule"/>
</dbReference>
<dbReference type="Gene3D" id="1.10.520.20">
    <property type="entry name" value="N-terminal domain of the delta subunit of the F1F0-ATP synthase"/>
    <property type="match status" value="1"/>
</dbReference>
<dbReference type="HAMAP" id="MF_01416">
    <property type="entry name" value="ATP_synth_delta_bact"/>
    <property type="match status" value="1"/>
</dbReference>
<dbReference type="InterPro" id="IPR026015">
    <property type="entry name" value="ATP_synth_OSCP/delta_N_sf"/>
</dbReference>
<dbReference type="InterPro" id="IPR020781">
    <property type="entry name" value="ATPase_OSCP/d_CS"/>
</dbReference>
<dbReference type="InterPro" id="IPR000711">
    <property type="entry name" value="ATPase_OSCP/dsu"/>
</dbReference>
<dbReference type="NCBIfam" id="TIGR01145">
    <property type="entry name" value="ATP_synt_delta"/>
    <property type="match status" value="1"/>
</dbReference>
<dbReference type="NCBIfam" id="NF004402">
    <property type="entry name" value="PRK05758.2-2"/>
    <property type="match status" value="1"/>
</dbReference>
<dbReference type="NCBIfam" id="NF004403">
    <property type="entry name" value="PRK05758.2-4"/>
    <property type="match status" value="1"/>
</dbReference>
<dbReference type="PANTHER" id="PTHR11910">
    <property type="entry name" value="ATP SYNTHASE DELTA CHAIN"/>
    <property type="match status" value="1"/>
</dbReference>
<dbReference type="Pfam" id="PF00213">
    <property type="entry name" value="OSCP"/>
    <property type="match status" value="1"/>
</dbReference>
<dbReference type="PRINTS" id="PR00125">
    <property type="entry name" value="ATPASEDELTA"/>
</dbReference>
<dbReference type="SUPFAM" id="SSF47928">
    <property type="entry name" value="N-terminal domain of the delta subunit of the F1F0-ATP synthase"/>
    <property type="match status" value="1"/>
</dbReference>
<dbReference type="PROSITE" id="PS00389">
    <property type="entry name" value="ATPASE_DELTA"/>
    <property type="match status" value="1"/>
</dbReference>
<proteinExistence type="inferred from homology"/>
<organism>
    <name type="scientific">Bacillus cereus (strain ZK / E33L)</name>
    <dbReference type="NCBI Taxonomy" id="288681"/>
    <lineage>
        <taxon>Bacteria</taxon>
        <taxon>Bacillati</taxon>
        <taxon>Bacillota</taxon>
        <taxon>Bacilli</taxon>
        <taxon>Bacillales</taxon>
        <taxon>Bacillaceae</taxon>
        <taxon>Bacillus</taxon>
        <taxon>Bacillus cereus group</taxon>
    </lineage>
</organism>
<evidence type="ECO:0000255" key="1">
    <source>
        <dbReference type="HAMAP-Rule" id="MF_01416"/>
    </source>
</evidence>
<gene>
    <name evidence="1" type="primary">atpH</name>
    <name type="ordered locus">BCE33L5008</name>
</gene>
<keyword id="KW-0066">ATP synthesis</keyword>
<keyword id="KW-1003">Cell membrane</keyword>
<keyword id="KW-0139">CF(1)</keyword>
<keyword id="KW-0375">Hydrogen ion transport</keyword>
<keyword id="KW-0406">Ion transport</keyword>
<keyword id="KW-0472">Membrane</keyword>
<keyword id="KW-0813">Transport</keyword>
<sequence>MSNGIVAKRYAVALFKIAKEKHVLEMFEEELRLVQNVYEKNGELHSFLTQPNISKEQKKTFLANVFGSVSESILNTLYILIDNKRIDILSDIANEYVVLANEERNVADATVYSTRLLSEEEKLNIAEAFAKRTGKDAIRVKNVVDEDLLGGIKVRIGNRIYDGSLQGKLARIQRELMKNR</sequence>
<name>ATPD_BACCZ</name>
<comment type="function">
    <text evidence="1">F(1)F(0) ATP synthase produces ATP from ADP in the presence of a proton or sodium gradient. F-type ATPases consist of two structural domains, F(1) containing the extramembraneous catalytic core and F(0) containing the membrane proton channel, linked together by a central stalk and a peripheral stalk. During catalysis, ATP synthesis in the catalytic domain of F(1) is coupled via a rotary mechanism of the central stalk subunits to proton translocation.</text>
</comment>
<comment type="function">
    <text evidence="1">This protein is part of the stalk that links CF(0) to CF(1). It either transmits conformational changes from CF(0) to CF(1) or is implicated in proton conduction.</text>
</comment>
<comment type="subunit">
    <text evidence="1">F-type ATPases have 2 components, F(1) - the catalytic core - and F(0) - the membrane proton channel. F(1) has five subunits: alpha(3), beta(3), gamma(1), delta(1), epsilon(1). F(0) has three main subunits: a(1), b(2) and c(10-14). The alpha and beta chains form an alternating ring which encloses part of the gamma chain. F(1) is attached to F(0) by a central stalk formed by the gamma and epsilon chains, while a peripheral stalk is formed by the delta and b chains.</text>
</comment>
<comment type="subcellular location">
    <subcellularLocation>
        <location evidence="1">Cell membrane</location>
        <topology evidence="1">Peripheral membrane protein</topology>
    </subcellularLocation>
</comment>
<comment type="similarity">
    <text evidence="1">Belongs to the ATPase delta chain family.</text>
</comment>
<reference key="1">
    <citation type="journal article" date="2006" name="J. Bacteriol.">
        <title>Pathogenomic sequence analysis of Bacillus cereus and Bacillus thuringiensis isolates closely related to Bacillus anthracis.</title>
        <authorList>
            <person name="Han C.S."/>
            <person name="Xie G."/>
            <person name="Challacombe J.F."/>
            <person name="Altherr M.R."/>
            <person name="Bhotika S.S."/>
            <person name="Bruce D."/>
            <person name="Campbell C.S."/>
            <person name="Campbell M.L."/>
            <person name="Chen J."/>
            <person name="Chertkov O."/>
            <person name="Cleland C."/>
            <person name="Dimitrijevic M."/>
            <person name="Doggett N.A."/>
            <person name="Fawcett J.J."/>
            <person name="Glavina T."/>
            <person name="Goodwin L.A."/>
            <person name="Hill K.K."/>
            <person name="Hitchcock P."/>
            <person name="Jackson P.J."/>
            <person name="Keim P."/>
            <person name="Kewalramani A.R."/>
            <person name="Longmire J."/>
            <person name="Lucas S."/>
            <person name="Malfatti S."/>
            <person name="McMurry K."/>
            <person name="Meincke L.J."/>
            <person name="Misra M."/>
            <person name="Moseman B.L."/>
            <person name="Mundt M."/>
            <person name="Munk A.C."/>
            <person name="Okinaka R.T."/>
            <person name="Parson-Quintana B."/>
            <person name="Reilly L.P."/>
            <person name="Richardson P."/>
            <person name="Robinson D.L."/>
            <person name="Rubin E."/>
            <person name="Saunders E."/>
            <person name="Tapia R."/>
            <person name="Tesmer J.G."/>
            <person name="Thayer N."/>
            <person name="Thompson L.S."/>
            <person name="Tice H."/>
            <person name="Ticknor L.O."/>
            <person name="Wills P.L."/>
            <person name="Brettin T.S."/>
            <person name="Gilna P."/>
        </authorList>
    </citation>
    <scope>NUCLEOTIDE SEQUENCE [LARGE SCALE GENOMIC DNA]</scope>
    <source>
        <strain>ZK / E33L</strain>
    </source>
</reference>
<protein>
    <recommendedName>
        <fullName evidence="1">ATP synthase subunit delta</fullName>
    </recommendedName>
    <alternativeName>
        <fullName evidence="1">ATP synthase F(1) sector subunit delta</fullName>
    </alternativeName>
    <alternativeName>
        <fullName evidence="1">F-type ATPase subunit delta</fullName>
        <shortName evidence="1">F-ATPase subunit delta</shortName>
    </alternativeName>
</protein>
<accession>Q630U0</accession>
<feature type="chain" id="PRO_0000370889" description="ATP synthase subunit delta">
    <location>
        <begin position="1"/>
        <end position="180"/>
    </location>
</feature>